<reference key="1">
    <citation type="journal article" date="2010" name="PLoS ONE">
        <title>The complete multipartite genome sequence of Cupriavidus necator JMP134, a versatile pollutant degrader.</title>
        <authorList>
            <person name="Lykidis A."/>
            <person name="Perez-Pantoja D."/>
            <person name="Ledger T."/>
            <person name="Mavromatis K."/>
            <person name="Anderson I.J."/>
            <person name="Ivanova N.N."/>
            <person name="Hooper S.D."/>
            <person name="Lapidus A."/>
            <person name="Lucas S."/>
            <person name="Gonzalez B."/>
            <person name="Kyrpides N.C."/>
        </authorList>
    </citation>
    <scope>NUCLEOTIDE SEQUENCE [LARGE SCALE GENOMIC DNA]</scope>
    <source>
        <strain>JMP134 / LMG 1197</strain>
    </source>
</reference>
<gene>
    <name evidence="1" type="primary">rpsI</name>
    <name type="ordered locus">Reut_A0469</name>
</gene>
<proteinExistence type="inferred from homology"/>
<keyword id="KW-0687">Ribonucleoprotein</keyword>
<keyword id="KW-0689">Ribosomal protein</keyword>
<name>RS9_CUPPJ</name>
<comment type="similarity">
    <text evidence="1">Belongs to the universal ribosomal protein uS9 family.</text>
</comment>
<protein>
    <recommendedName>
        <fullName evidence="1">Small ribosomal subunit protein uS9</fullName>
    </recommendedName>
    <alternativeName>
        <fullName evidence="2">30S ribosomal protein S9</fullName>
    </alternativeName>
</protein>
<evidence type="ECO:0000255" key="1">
    <source>
        <dbReference type="HAMAP-Rule" id="MF_00532"/>
    </source>
</evidence>
<evidence type="ECO:0000305" key="2"/>
<accession>Q475T2</accession>
<organism>
    <name type="scientific">Cupriavidus pinatubonensis (strain JMP 134 / LMG 1197)</name>
    <name type="common">Cupriavidus necator (strain JMP 134)</name>
    <dbReference type="NCBI Taxonomy" id="264198"/>
    <lineage>
        <taxon>Bacteria</taxon>
        <taxon>Pseudomonadati</taxon>
        <taxon>Pseudomonadota</taxon>
        <taxon>Betaproteobacteria</taxon>
        <taxon>Burkholderiales</taxon>
        <taxon>Burkholderiaceae</taxon>
        <taxon>Cupriavidus</taxon>
    </lineage>
</organism>
<feature type="chain" id="PRO_1000051301" description="Small ribosomal subunit protein uS9">
    <location>
        <begin position="1"/>
        <end position="130"/>
    </location>
</feature>
<sequence>MIGNWNYGTGRRKSAVARVFIKSGKGDIVVNGKPIKEYFARETSLMIVRQPLELTEHAETFDIKVNVTGGGETGQAGAVRHGITRALIDYDATLKSALSKAGYVTRDAREVERKKVGFHKARRRKQFSKR</sequence>
<dbReference type="EMBL" id="CP000090">
    <property type="protein sequence ID" value="AAZ59851.1"/>
    <property type="molecule type" value="Genomic_DNA"/>
</dbReference>
<dbReference type="SMR" id="Q475T2"/>
<dbReference type="STRING" id="264198.Reut_A0469"/>
<dbReference type="KEGG" id="reu:Reut_A0469"/>
<dbReference type="eggNOG" id="COG0103">
    <property type="taxonomic scope" value="Bacteria"/>
</dbReference>
<dbReference type="HOGENOM" id="CLU_046483_2_1_4"/>
<dbReference type="OrthoDB" id="9803965at2"/>
<dbReference type="GO" id="GO:0022627">
    <property type="term" value="C:cytosolic small ribosomal subunit"/>
    <property type="evidence" value="ECO:0007669"/>
    <property type="project" value="TreeGrafter"/>
</dbReference>
<dbReference type="GO" id="GO:0003723">
    <property type="term" value="F:RNA binding"/>
    <property type="evidence" value="ECO:0007669"/>
    <property type="project" value="TreeGrafter"/>
</dbReference>
<dbReference type="GO" id="GO:0003735">
    <property type="term" value="F:structural constituent of ribosome"/>
    <property type="evidence" value="ECO:0007669"/>
    <property type="project" value="InterPro"/>
</dbReference>
<dbReference type="GO" id="GO:0006412">
    <property type="term" value="P:translation"/>
    <property type="evidence" value="ECO:0007669"/>
    <property type="project" value="UniProtKB-UniRule"/>
</dbReference>
<dbReference type="FunFam" id="3.30.230.10:FF:000001">
    <property type="entry name" value="30S ribosomal protein S9"/>
    <property type="match status" value="1"/>
</dbReference>
<dbReference type="Gene3D" id="3.30.230.10">
    <property type="match status" value="1"/>
</dbReference>
<dbReference type="HAMAP" id="MF_00532_B">
    <property type="entry name" value="Ribosomal_uS9_B"/>
    <property type="match status" value="1"/>
</dbReference>
<dbReference type="InterPro" id="IPR020568">
    <property type="entry name" value="Ribosomal_Su5_D2-typ_SF"/>
</dbReference>
<dbReference type="InterPro" id="IPR000754">
    <property type="entry name" value="Ribosomal_uS9"/>
</dbReference>
<dbReference type="InterPro" id="IPR023035">
    <property type="entry name" value="Ribosomal_uS9_bac/plastid"/>
</dbReference>
<dbReference type="InterPro" id="IPR020574">
    <property type="entry name" value="Ribosomal_uS9_CS"/>
</dbReference>
<dbReference type="InterPro" id="IPR014721">
    <property type="entry name" value="Ribsml_uS5_D2-typ_fold_subgr"/>
</dbReference>
<dbReference type="NCBIfam" id="NF001099">
    <property type="entry name" value="PRK00132.1"/>
    <property type="match status" value="1"/>
</dbReference>
<dbReference type="PANTHER" id="PTHR21569">
    <property type="entry name" value="RIBOSOMAL PROTEIN S9"/>
    <property type="match status" value="1"/>
</dbReference>
<dbReference type="PANTHER" id="PTHR21569:SF1">
    <property type="entry name" value="SMALL RIBOSOMAL SUBUNIT PROTEIN US9M"/>
    <property type="match status" value="1"/>
</dbReference>
<dbReference type="Pfam" id="PF00380">
    <property type="entry name" value="Ribosomal_S9"/>
    <property type="match status" value="1"/>
</dbReference>
<dbReference type="SUPFAM" id="SSF54211">
    <property type="entry name" value="Ribosomal protein S5 domain 2-like"/>
    <property type="match status" value="1"/>
</dbReference>
<dbReference type="PROSITE" id="PS00360">
    <property type="entry name" value="RIBOSOMAL_S9"/>
    <property type="match status" value="1"/>
</dbReference>